<keyword id="KW-0067">ATP-binding</keyword>
<keyword id="KW-0963">Cytoplasm</keyword>
<keyword id="KW-0418">Kinase</keyword>
<keyword id="KW-0496">Mitochondrion</keyword>
<keyword id="KW-0547">Nucleotide-binding</keyword>
<keyword id="KW-0597">Phosphoprotein</keyword>
<keyword id="KW-0808">Transferase</keyword>
<accession>B3NQ53</accession>
<comment type="function">
    <text evidence="2">Catalyzes the reversible transfer of the terminal phosphate group between ATP and AMP. Plays an important role in cellular energy homeostasis and in adenine nucleotide metabolism. Adenylate kinase activity is critical for regulation of the phosphate utilization and the AMP de novo biosynthesis pathways.</text>
</comment>
<comment type="catalytic activity">
    <reaction evidence="2">
        <text>AMP + ATP = 2 ADP</text>
        <dbReference type="Rhea" id="RHEA:12973"/>
        <dbReference type="ChEBI" id="CHEBI:30616"/>
        <dbReference type="ChEBI" id="CHEBI:456215"/>
        <dbReference type="ChEBI" id="CHEBI:456216"/>
        <dbReference type="EC" id="2.7.4.3"/>
    </reaction>
</comment>
<comment type="subunit">
    <text evidence="2">Monomer.</text>
</comment>
<comment type="subcellular location">
    <subcellularLocation>
        <location evidence="2">Cytoplasm</location>
        <location evidence="2">Cytosol</location>
    </subcellularLocation>
    <subcellularLocation>
        <location evidence="2">Mitochondrion intermembrane space</location>
    </subcellularLocation>
    <text evidence="2">Predominantly mitochondrial.</text>
</comment>
<comment type="domain">
    <text evidence="2">Consists of three domains, a large central CORE domain and two small peripheral domains, NMPbind and LID, which undergo movements during catalysis. The LID domain closes over the site of phosphoryl transfer upon ATP binding. Assembling and dissambling the active center during each catalytic cycle provides an effective means to prevent ATP hydrolysis.</text>
</comment>
<comment type="similarity">
    <text evidence="2">Belongs to the adenylate kinase family. AK2 subfamily.</text>
</comment>
<evidence type="ECO:0000250" key="1"/>
<evidence type="ECO:0000255" key="2">
    <source>
        <dbReference type="HAMAP-Rule" id="MF_03168"/>
    </source>
</evidence>
<sequence length="240" mass="26575">MAPNAAVPVERYEPQTLGINAILLGPPGSGKGTQAPLLKEKFCVCHLSTGDMLRAEISSGSKLGAELKKVMDAGKLVSDELVVDMIDSNLDKPECKNGFLLDGFPRTVVQAEKLDTLLDKRKTNLDAVIEFAIDDNLLVRRITGRLIHQASGRSYHEEFAPPKKSMTDDVTGEPLIRRSDDNAEALKKRLEAYHKQTRPLVDYYGLRGLHFKVDAAKKSSDVFSAIDNIFQRKRSAQIQL</sequence>
<name>KAD2_DROER</name>
<protein>
    <recommendedName>
        <fullName evidence="2">Adenylate kinase</fullName>
        <ecNumber evidence="2">2.7.4.3</ecNumber>
    </recommendedName>
    <alternativeName>
        <fullName evidence="2">ATP-AMP transphosphorylase</fullName>
    </alternativeName>
    <alternativeName>
        <fullName evidence="2">ATP:AMP phosphotransferase</fullName>
    </alternativeName>
    <alternativeName>
        <fullName evidence="2">Adenylate kinase cytosolic and mitochondrial</fullName>
    </alternativeName>
    <alternativeName>
        <fullName evidence="2">Adenylate monophosphate kinase</fullName>
    </alternativeName>
</protein>
<organism>
    <name type="scientific">Drosophila erecta</name>
    <name type="common">Fruit fly</name>
    <dbReference type="NCBI Taxonomy" id="7220"/>
    <lineage>
        <taxon>Eukaryota</taxon>
        <taxon>Metazoa</taxon>
        <taxon>Ecdysozoa</taxon>
        <taxon>Arthropoda</taxon>
        <taxon>Hexapoda</taxon>
        <taxon>Insecta</taxon>
        <taxon>Pterygota</taxon>
        <taxon>Neoptera</taxon>
        <taxon>Endopterygota</taxon>
        <taxon>Diptera</taxon>
        <taxon>Brachycera</taxon>
        <taxon>Muscomorpha</taxon>
        <taxon>Ephydroidea</taxon>
        <taxon>Drosophilidae</taxon>
        <taxon>Drosophila</taxon>
        <taxon>Sophophora</taxon>
    </lineage>
</organism>
<reference key="1">
    <citation type="journal article" date="2007" name="Nature">
        <title>Evolution of genes and genomes on the Drosophila phylogeny.</title>
        <authorList>
            <consortium name="Drosophila 12 genomes consortium"/>
        </authorList>
    </citation>
    <scope>NUCLEOTIDE SEQUENCE [LARGE SCALE GENOMIC DNA]</scope>
    <source>
        <strain>Tucson 14021-0224.01</strain>
    </source>
</reference>
<proteinExistence type="inferred from homology"/>
<gene>
    <name evidence="2" type="primary">Adk2</name>
    <name type="ORF">GG22922</name>
</gene>
<dbReference type="EC" id="2.7.4.3" evidence="2"/>
<dbReference type="EMBL" id="CH954179">
    <property type="protein sequence ID" value="EDV56926.1"/>
    <property type="molecule type" value="Genomic_DNA"/>
</dbReference>
<dbReference type="SMR" id="B3NQ53"/>
<dbReference type="EnsemblMetazoa" id="FBtr0142976">
    <property type="protein sequence ID" value="FBpp0141468"/>
    <property type="gene ID" value="FBgn0115079"/>
</dbReference>
<dbReference type="EnsemblMetazoa" id="XM_001976490.3">
    <property type="protein sequence ID" value="XP_001976526.1"/>
    <property type="gene ID" value="LOC6548394"/>
</dbReference>
<dbReference type="GeneID" id="6548394"/>
<dbReference type="KEGG" id="der:6548394"/>
<dbReference type="CTD" id="204"/>
<dbReference type="eggNOG" id="KOG3078">
    <property type="taxonomic scope" value="Eukaryota"/>
</dbReference>
<dbReference type="HOGENOM" id="CLU_032354_1_0_1"/>
<dbReference type="OMA" id="HYKVDAA"/>
<dbReference type="OrthoDB" id="439792at2759"/>
<dbReference type="PhylomeDB" id="B3NQ53"/>
<dbReference type="Proteomes" id="UP000008711">
    <property type="component" value="Unassembled WGS sequence"/>
</dbReference>
<dbReference type="GO" id="GO:0005829">
    <property type="term" value="C:cytosol"/>
    <property type="evidence" value="ECO:0007669"/>
    <property type="project" value="UniProtKB-SubCell"/>
</dbReference>
<dbReference type="GO" id="GO:0005758">
    <property type="term" value="C:mitochondrial intermembrane space"/>
    <property type="evidence" value="ECO:0007669"/>
    <property type="project" value="UniProtKB-SubCell"/>
</dbReference>
<dbReference type="GO" id="GO:0004017">
    <property type="term" value="F:adenylate kinase activity"/>
    <property type="evidence" value="ECO:0007669"/>
    <property type="project" value="UniProtKB-UniRule"/>
</dbReference>
<dbReference type="GO" id="GO:0005524">
    <property type="term" value="F:ATP binding"/>
    <property type="evidence" value="ECO:0007669"/>
    <property type="project" value="UniProtKB-KW"/>
</dbReference>
<dbReference type="GO" id="GO:0006172">
    <property type="term" value="P:ADP biosynthetic process"/>
    <property type="evidence" value="ECO:0007669"/>
    <property type="project" value="UniProtKB-UniRule"/>
</dbReference>
<dbReference type="GO" id="GO:0046033">
    <property type="term" value="P:AMP metabolic process"/>
    <property type="evidence" value="ECO:0007669"/>
    <property type="project" value="UniProtKB-UniRule"/>
</dbReference>
<dbReference type="GO" id="GO:0046034">
    <property type="term" value="P:ATP metabolic process"/>
    <property type="evidence" value="ECO:0007669"/>
    <property type="project" value="UniProtKB-UniRule"/>
</dbReference>
<dbReference type="CDD" id="cd01428">
    <property type="entry name" value="ADK"/>
    <property type="match status" value="1"/>
</dbReference>
<dbReference type="FunFam" id="3.40.50.300:FF:000106">
    <property type="entry name" value="Adenylate kinase mitochondrial"/>
    <property type="match status" value="1"/>
</dbReference>
<dbReference type="Gene3D" id="3.40.50.300">
    <property type="entry name" value="P-loop containing nucleotide triphosphate hydrolases"/>
    <property type="match status" value="1"/>
</dbReference>
<dbReference type="HAMAP" id="MF_00235">
    <property type="entry name" value="Adenylate_kinase_Adk"/>
    <property type="match status" value="1"/>
</dbReference>
<dbReference type="HAMAP" id="MF_03168">
    <property type="entry name" value="Adenylate_kinase_AK2"/>
    <property type="match status" value="1"/>
</dbReference>
<dbReference type="InterPro" id="IPR006259">
    <property type="entry name" value="Adenyl_kin_sub"/>
</dbReference>
<dbReference type="InterPro" id="IPR000850">
    <property type="entry name" value="Adenylat/UMP-CMP_kin"/>
</dbReference>
<dbReference type="InterPro" id="IPR033690">
    <property type="entry name" value="Adenylat_kinase_CS"/>
</dbReference>
<dbReference type="InterPro" id="IPR007862">
    <property type="entry name" value="Adenylate_kinase_lid-dom"/>
</dbReference>
<dbReference type="InterPro" id="IPR028587">
    <property type="entry name" value="AK2"/>
</dbReference>
<dbReference type="InterPro" id="IPR027417">
    <property type="entry name" value="P-loop_NTPase"/>
</dbReference>
<dbReference type="NCBIfam" id="TIGR01351">
    <property type="entry name" value="adk"/>
    <property type="match status" value="1"/>
</dbReference>
<dbReference type="NCBIfam" id="NF001380">
    <property type="entry name" value="PRK00279.1-2"/>
    <property type="match status" value="1"/>
</dbReference>
<dbReference type="NCBIfam" id="NF001381">
    <property type="entry name" value="PRK00279.1-3"/>
    <property type="match status" value="1"/>
</dbReference>
<dbReference type="NCBIfam" id="NF011100">
    <property type="entry name" value="PRK14527.1"/>
    <property type="match status" value="1"/>
</dbReference>
<dbReference type="PANTHER" id="PTHR23359">
    <property type="entry name" value="NUCLEOTIDE KINASE"/>
    <property type="match status" value="1"/>
</dbReference>
<dbReference type="Pfam" id="PF00406">
    <property type="entry name" value="ADK"/>
    <property type="match status" value="1"/>
</dbReference>
<dbReference type="Pfam" id="PF05191">
    <property type="entry name" value="ADK_lid"/>
    <property type="match status" value="1"/>
</dbReference>
<dbReference type="PRINTS" id="PR00094">
    <property type="entry name" value="ADENYLTKNASE"/>
</dbReference>
<dbReference type="SUPFAM" id="SSF52540">
    <property type="entry name" value="P-loop containing nucleoside triphosphate hydrolases"/>
    <property type="match status" value="1"/>
</dbReference>
<dbReference type="PROSITE" id="PS00113">
    <property type="entry name" value="ADENYLATE_KINASE"/>
    <property type="match status" value="1"/>
</dbReference>
<feature type="chain" id="PRO_0000365704" description="Adenylate kinase">
    <location>
        <begin position="1"/>
        <end position="240"/>
    </location>
</feature>
<feature type="region of interest" description="NMP" evidence="2">
    <location>
        <begin position="48"/>
        <end position="77"/>
    </location>
</feature>
<feature type="region of interest" description="LID" evidence="2">
    <location>
        <begin position="144"/>
        <end position="181"/>
    </location>
</feature>
<feature type="binding site" evidence="2">
    <location>
        <begin position="28"/>
        <end position="33"/>
    </location>
    <ligand>
        <name>ATP</name>
        <dbReference type="ChEBI" id="CHEBI:30616"/>
    </ligand>
</feature>
<feature type="binding site" evidence="2">
    <location>
        <position position="49"/>
    </location>
    <ligand>
        <name>AMP</name>
        <dbReference type="ChEBI" id="CHEBI:456215"/>
    </ligand>
</feature>
<feature type="binding site" evidence="2">
    <location>
        <position position="54"/>
    </location>
    <ligand>
        <name>AMP</name>
        <dbReference type="ChEBI" id="CHEBI:456215"/>
    </ligand>
</feature>
<feature type="binding site" evidence="2">
    <location>
        <begin position="75"/>
        <end position="77"/>
    </location>
    <ligand>
        <name>AMP</name>
        <dbReference type="ChEBI" id="CHEBI:456215"/>
    </ligand>
</feature>
<feature type="binding site" evidence="2">
    <location>
        <begin position="103"/>
        <end position="106"/>
    </location>
    <ligand>
        <name>AMP</name>
        <dbReference type="ChEBI" id="CHEBI:456215"/>
    </ligand>
</feature>
<feature type="binding site" evidence="2">
    <location>
        <position position="110"/>
    </location>
    <ligand>
        <name>AMP</name>
        <dbReference type="ChEBI" id="CHEBI:456215"/>
    </ligand>
</feature>
<feature type="binding site" evidence="2">
    <location>
        <position position="145"/>
    </location>
    <ligand>
        <name>ATP</name>
        <dbReference type="ChEBI" id="CHEBI:30616"/>
    </ligand>
</feature>
<feature type="binding site" evidence="2">
    <location>
        <begin position="154"/>
        <end position="155"/>
    </location>
    <ligand>
        <name>ATP</name>
        <dbReference type="ChEBI" id="CHEBI:30616"/>
    </ligand>
</feature>
<feature type="binding site" evidence="2">
    <location>
        <position position="178"/>
    </location>
    <ligand>
        <name>AMP</name>
        <dbReference type="ChEBI" id="CHEBI:456215"/>
    </ligand>
</feature>
<feature type="binding site" evidence="2">
    <location>
        <position position="189"/>
    </location>
    <ligand>
        <name>AMP</name>
        <dbReference type="ChEBI" id="CHEBI:456215"/>
    </ligand>
</feature>
<feature type="binding site" evidence="2">
    <location>
        <position position="217"/>
    </location>
    <ligand>
        <name>ATP</name>
        <dbReference type="ChEBI" id="CHEBI:30616"/>
    </ligand>
</feature>
<feature type="modified residue" description="Phosphoserine" evidence="1">
    <location>
        <position position="48"/>
    </location>
</feature>